<evidence type="ECO:0000250" key="1"/>
<evidence type="ECO:0000255" key="2">
    <source>
        <dbReference type="PROSITE-ProRule" id="PRU00303"/>
    </source>
</evidence>
<evidence type="ECO:0000255" key="3">
    <source>
        <dbReference type="PROSITE-ProRule" id="PRU10101"/>
    </source>
</evidence>
<evidence type="ECO:0000256" key="4">
    <source>
        <dbReference type="SAM" id="MobiDB-lite"/>
    </source>
</evidence>
<evidence type="ECO:0000269" key="5">
    <source>
    </source>
</evidence>
<evidence type="ECO:0000305" key="6"/>
<evidence type="ECO:0000305" key="7">
    <source>
    </source>
</evidence>
<evidence type="ECO:0000305" key="8">
    <source>
    </source>
</evidence>
<feature type="signal peptide">
    <location>
        <begin position="1"/>
        <end position="29"/>
    </location>
</feature>
<feature type="chain" id="PRO_0000016968" description="Beta-lactamase 3">
    <location>
        <begin position="30"/>
        <end position="316"/>
    </location>
</feature>
<feature type="region of interest" description="Disordered" evidence="4">
    <location>
        <begin position="34"/>
        <end position="53"/>
    </location>
</feature>
<feature type="compositionally biased region" description="Low complexity" evidence="4">
    <location>
        <begin position="40"/>
        <end position="50"/>
    </location>
</feature>
<feature type="active site" description="Acyl-ester intermediate" evidence="3">
    <location>
        <position position="95"/>
    </location>
</feature>
<feature type="active site" description="Proton acceptor" evidence="1">
    <location>
        <position position="191"/>
    </location>
</feature>
<feature type="binding site" evidence="1">
    <location>
        <begin position="257"/>
        <end position="259"/>
    </location>
    <ligand>
        <name>substrate</name>
    </ligand>
</feature>
<feature type="lipid moiety-binding region" description="N-palmitoyl cysteine" evidence="8">
    <location>
        <position position="30"/>
    </location>
</feature>
<feature type="lipid moiety-binding region" description="S-diacylglycerol cysteine" evidence="2 5">
    <location>
        <position position="30"/>
    </location>
</feature>
<reference key="1">
    <citation type="journal article" date="1987" name="J. Bacteriol.">
        <title>Cloning and sequencing of the blaZ gene encoding beta-lactamase III, a lipoprotein of Bacillus cereus 569/H.</title>
        <authorList>
            <person name="Hussain M."/>
            <person name="Pastor F.I.J."/>
            <person name="Lampen J.O."/>
        </authorList>
    </citation>
    <scope>NUCLEOTIDE SEQUENCE [GENOMIC DNA]</scope>
    <scope>PROTEIN SEQUENCE OF 135-146</scope>
    <source>
        <strain>569/H / NCTC 9945</strain>
    </source>
</reference>
<reference key="2">
    <citation type="journal article" date="1983" name="Biochemistry">
        <title>Beta-lactamase III of Bacillus cereus 569: membrane lipoprotein and secreted protein.</title>
        <authorList>
            <person name="Nielsen J.B."/>
            <person name="Lampen J.O."/>
        </authorList>
    </citation>
    <scope>DIACYLGLYCEROL AT CYS-30</scope>
    <scope>PALMITOYLATION AT CYS-30</scope>
</reference>
<reference key="3">
    <citation type="journal article" date="1991" name="Biochem. J.">
        <title>A standard numbering scheme for the class A beta-lactamases.</title>
        <authorList>
            <person name="Ambler R.P."/>
            <person name="Coulson A.F."/>
            <person name="Frere J.M."/>
            <person name="Ghuysen J.M."/>
            <person name="Joris B."/>
            <person name="Forsman M."/>
            <person name="Levesque R.C."/>
            <person name="Tiraby G."/>
            <person name="Waley S.G."/>
        </authorList>
    </citation>
    <scope>AMINO ACID NUMBERING SCHEME</scope>
</reference>
<sequence>MFVLNKFFTNSHYKKIVPVVLLSCATLIGCSNSNTQSESNKQTNQTNQVKQENKRNHAFAKLEKEYNAKLGIYALDTSTNQTVAYHADDRFAFASTSKSLAVGALLRQNSIEALDERITYTRKDLSNYNPITEKHVDTGMTLKELADASVRYSDSTAHNLILKKLGGPSAFEKILREMGDTVTNSERFEPELNEVNPGETHDTSTPKAIAKTLQSFTLGTVLPSEKRELLVDWMKRNTTGDKLIRAGVPKGWEVADKTGAGSYGTRNDIAIIWPPNKKPIVLSILSNHDKEDAEYDDTLIADATKIVLETLKVTNK</sequence>
<dbReference type="EC" id="3.5.2.6"/>
<dbReference type="EMBL" id="M15195">
    <property type="protein sequence ID" value="AAA22274.1"/>
    <property type="molecule type" value="Genomic_DNA"/>
</dbReference>
<dbReference type="PIR" id="A27755">
    <property type="entry name" value="PNBSLC"/>
</dbReference>
<dbReference type="SMR" id="P06548"/>
<dbReference type="GO" id="GO:0005886">
    <property type="term" value="C:plasma membrane"/>
    <property type="evidence" value="ECO:0007669"/>
    <property type="project" value="UniProtKB-SubCell"/>
</dbReference>
<dbReference type="GO" id="GO:0008800">
    <property type="term" value="F:beta-lactamase activity"/>
    <property type="evidence" value="ECO:0007669"/>
    <property type="project" value="UniProtKB-EC"/>
</dbReference>
<dbReference type="GO" id="GO:0030655">
    <property type="term" value="P:beta-lactam antibiotic catabolic process"/>
    <property type="evidence" value="ECO:0007669"/>
    <property type="project" value="InterPro"/>
</dbReference>
<dbReference type="GO" id="GO:0046677">
    <property type="term" value="P:response to antibiotic"/>
    <property type="evidence" value="ECO:0007669"/>
    <property type="project" value="UniProtKB-KW"/>
</dbReference>
<dbReference type="Gene3D" id="3.40.710.10">
    <property type="entry name" value="DD-peptidase/beta-lactamase superfamily"/>
    <property type="match status" value="1"/>
</dbReference>
<dbReference type="InterPro" id="IPR012338">
    <property type="entry name" value="Beta-lactam/transpept-like"/>
</dbReference>
<dbReference type="InterPro" id="IPR045155">
    <property type="entry name" value="Beta-lactam_cat"/>
</dbReference>
<dbReference type="InterPro" id="IPR000871">
    <property type="entry name" value="Beta-lactam_class-A"/>
</dbReference>
<dbReference type="InterPro" id="IPR023650">
    <property type="entry name" value="Beta-lactam_class-A_AS"/>
</dbReference>
<dbReference type="NCBIfam" id="NF041270">
    <property type="entry name" value="bla_Bcer_III"/>
    <property type="match status" value="1"/>
</dbReference>
<dbReference type="NCBIfam" id="NF033103">
    <property type="entry name" value="bla_class_A"/>
    <property type="match status" value="1"/>
</dbReference>
<dbReference type="NCBIfam" id="NF012167">
    <property type="entry name" value="classA_firm"/>
    <property type="match status" value="1"/>
</dbReference>
<dbReference type="PANTHER" id="PTHR35333">
    <property type="entry name" value="BETA-LACTAMASE"/>
    <property type="match status" value="1"/>
</dbReference>
<dbReference type="PANTHER" id="PTHR35333:SF3">
    <property type="entry name" value="BETA-LACTAMASE-TYPE TRANSPEPTIDASE FOLD CONTAINING PROTEIN"/>
    <property type="match status" value="1"/>
</dbReference>
<dbReference type="Pfam" id="PF13354">
    <property type="entry name" value="Beta-lactamase2"/>
    <property type="match status" value="1"/>
</dbReference>
<dbReference type="PRINTS" id="PR00118">
    <property type="entry name" value="BLACTAMASEA"/>
</dbReference>
<dbReference type="SUPFAM" id="SSF56601">
    <property type="entry name" value="beta-lactamase/transpeptidase-like"/>
    <property type="match status" value="1"/>
</dbReference>
<dbReference type="PROSITE" id="PS00146">
    <property type="entry name" value="BETA_LACTAMASE_A"/>
    <property type="match status" value="1"/>
</dbReference>
<dbReference type="PROSITE" id="PS51257">
    <property type="entry name" value="PROKAR_LIPOPROTEIN"/>
    <property type="match status" value="1"/>
</dbReference>
<protein>
    <recommendedName>
        <fullName>Beta-lactamase 3</fullName>
        <ecNumber>3.5.2.6</ecNumber>
    </recommendedName>
    <alternativeName>
        <fullName>Beta-lactamase III</fullName>
    </alternativeName>
</protein>
<name>BLA3_BACCE</name>
<proteinExistence type="evidence at protein level"/>
<keyword id="KW-0046">Antibiotic resistance</keyword>
<keyword id="KW-1003">Cell membrane</keyword>
<keyword id="KW-0903">Direct protein sequencing</keyword>
<keyword id="KW-0378">Hydrolase</keyword>
<keyword id="KW-0449">Lipoprotein</keyword>
<keyword id="KW-0472">Membrane</keyword>
<keyword id="KW-0564">Palmitate</keyword>
<keyword id="KW-0732">Signal</keyword>
<organism>
    <name type="scientific">Bacillus cereus</name>
    <dbReference type="NCBI Taxonomy" id="1396"/>
    <lineage>
        <taxon>Bacteria</taxon>
        <taxon>Bacillati</taxon>
        <taxon>Bacillota</taxon>
        <taxon>Bacilli</taxon>
        <taxon>Bacillales</taxon>
        <taxon>Bacillaceae</taxon>
        <taxon>Bacillus</taxon>
        <taxon>Bacillus cereus group</taxon>
    </lineage>
</organism>
<accession>P06548</accession>
<comment type="catalytic activity">
    <reaction evidence="3">
        <text>a beta-lactam + H2O = a substituted beta-amino acid</text>
        <dbReference type="Rhea" id="RHEA:20401"/>
        <dbReference type="ChEBI" id="CHEBI:15377"/>
        <dbReference type="ChEBI" id="CHEBI:35627"/>
        <dbReference type="ChEBI" id="CHEBI:140347"/>
        <dbReference type="EC" id="3.5.2.6"/>
    </reaction>
</comment>
<comment type="subcellular location">
    <subcellularLocation>
        <location evidence="6">Cell membrane</location>
        <topology evidence="6">Lipid-anchor</topology>
    </subcellularLocation>
</comment>
<comment type="miscellaneous">
    <text evidence="7">The class A beta-lactamase family has a specific amino-acid numbering system, sometimes called Ambler or ABL numbering and often misspelt as Amber. A multiple sequence alignment was used to derive a consensus sequence and then the consensus was numbered taking into account insertions and deletions. This allows use of identical numbers, e.g. for active site residues, despite differences in protein length. UniProt always uses natural numbering of residues, hence there appear to be differences in numbering between this entry and some papers.</text>
</comment>
<comment type="similarity">
    <text evidence="6">Belongs to the class-A beta-lactamase family.</text>
</comment>
<gene>
    <name type="primary">blaZ</name>
</gene>